<sequence length="473" mass="52147">MDVPLASKTFPSPSPSKREQCNIDGHKSSSKHADLNPHVDDSVLGIILGGGAGTRLYPLTKKRAKPAVPLGANYRLIDIPVSNCLNSNISKIYVRTQFNSASLNRHLSRAYGSNIGGYKNEGFVEVLAAQQSPDNPDWFQGTADAVRQYLWLFEEHNVMEYLILAGDHLYRMDYEKFIQAHRETDADITVAALPMDEERATAFGLMKIDEEGRIIEFAEKPKGEQLKAMMVDTTILGLDDARAKEMPYIASMGIYVISKHVMLQLLREQFPGANDFGSEVIPGATSTGMRVQAYLYDGYWEDIGTIEAFYNANLGITKKPIPDFSFYDRSAPIYTQPRHLPPSKVLDADVTDSVIGEGCVIKNCKIHHSVVGLRSCISEGAIIEDTLLMGADYYETEADKKLLAEKGGIPIGIGKNSHIKRAIIDKNARIGDNVMIINVDNVQEAARETDGYFIKSGIVTVIKDALLPSGTVI</sequence>
<evidence type="ECO:0000255" key="1"/>
<evidence type="ECO:0000256" key="2">
    <source>
        <dbReference type="SAM" id="MobiDB-lite"/>
    </source>
</evidence>
<evidence type="ECO:0000305" key="3"/>
<gene>
    <name type="primary">AGP-S</name>
</gene>
<reference key="1">
    <citation type="journal article" date="1993" name="Plant Mol. Biol.">
        <title>Isolation and analysis of a cDNA clone encoding the small subunit of ADP-glucose pyrophosphorylase from wheat.</title>
        <authorList>
            <person name="Ainsworth C.C."/>
            <person name="Tarvis M.D.R."/>
            <person name="Clark J."/>
        </authorList>
    </citation>
    <scope>NUCLEOTIDE SEQUENCE [MRNA]</scope>
    <source>
        <strain>cv. Chinese Spring</strain>
        <tissue>Grain</tissue>
    </source>
</reference>
<comment type="function">
    <text>This protein plays a role in synthesis of starch. It catalyzes the synthesis of the activated glycosyl donor, ADP-glucose from Glc-1-P and ATP.</text>
</comment>
<comment type="catalytic activity">
    <reaction>
        <text>alpha-D-glucose 1-phosphate + ATP + H(+) = ADP-alpha-D-glucose + diphosphate</text>
        <dbReference type="Rhea" id="RHEA:12120"/>
        <dbReference type="ChEBI" id="CHEBI:15378"/>
        <dbReference type="ChEBI" id="CHEBI:30616"/>
        <dbReference type="ChEBI" id="CHEBI:33019"/>
        <dbReference type="ChEBI" id="CHEBI:57498"/>
        <dbReference type="ChEBI" id="CHEBI:58601"/>
        <dbReference type="EC" id="2.7.7.27"/>
    </reaction>
</comment>
<comment type="activity regulation">
    <text>Insensitive to 3'phosphoglycerate and orthophosphate.</text>
</comment>
<comment type="pathway">
    <text>Glycan biosynthesis; starch biosynthesis.</text>
</comment>
<comment type="subunit">
    <text>Heterotetramer.</text>
</comment>
<comment type="subcellular location">
    <subcellularLocation>
        <location>Plastid</location>
        <location>Chloroplast</location>
    </subcellularLocation>
    <subcellularLocation>
        <location>Plastid</location>
        <location>Amyloplast</location>
    </subcellularLocation>
    <text>Found in the chloroplast in leaf. Found in the plastid in the developing endosperm.</text>
</comment>
<comment type="tissue specificity">
    <text>Abundantly expressed in the whole grains, a slightly less abundant expression is seen in leaves, while a low level expression is seen in the roots. A greater expression is seen in the endosperm than in the embryo and pericarp layers.</text>
</comment>
<comment type="developmental stage">
    <text>Is expressed prior to 10 dpa (days post anthesis), accumulates to the highest levels between 20 and 35 dpa and levels decrease after 35 dpa.</text>
</comment>
<comment type="similarity">
    <text evidence="3">Belongs to the bacterial/plant glucose-1-phosphate adenylyltransferase family.</text>
</comment>
<protein>
    <recommendedName>
        <fullName>Glucose-1-phosphate adenylyltransferase small subunit, chloroplastic/amyloplastic</fullName>
        <ecNumber>2.7.7.27</ecNumber>
    </recommendedName>
    <alternativeName>
        <fullName>ADP-glucose pyrophosphorylase</fullName>
    </alternativeName>
    <alternativeName>
        <fullName>ADP-glucose synthase</fullName>
    </alternativeName>
    <alternativeName>
        <fullName>AGPase B</fullName>
    </alternativeName>
    <alternativeName>
        <fullName>Alpha-D-glucose-1-phosphate adenyl transferase</fullName>
    </alternativeName>
</protein>
<accession>P30523</accession>
<proteinExistence type="evidence at transcript level"/>
<feature type="transit peptide" description="Chloroplast" evidence="1">
    <location>
        <begin position="1"/>
        <end status="unknown"/>
    </location>
</feature>
<feature type="chain" id="PRO_0000011158" description="Glucose-1-phosphate adenylyltransferase small subunit, chloroplastic/amyloplastic">
    <location>
        <begin status="unknown"/>
        <end position="473"/>
    </location>
</feature>
<feature type="region of interest" description="Disordered" evidence="2">
    <location>
        <begin position="1"/>
        <end position="36"/>
    </location>
</feature>
<feature type="compositionally biased region" description="Basic and acidic residues" evidence="2">
    <location>
        <begin position="16"/>
        <end position="36"/>
    </location>
</feature>
<dbReference type="EC" id="2.7.7.27"/>
<dbReference type="EMBL" id="X66080">
    <property type="protein sequence ID" value="CAA46879.1"/>
    <property type="molecule type" value="mRNA"/>
</dbReference>
<dbReference type="PIR" id="S39504">
    <property type="entry name" value="S39504"/>
</dbReference>
<dbReference type="SMR" id="P30523"/>
<dbReference type="STRING" id="4565.P30523"/>
<dbReference type="PaxDb" id="4565-Traes_7DS_02539EB3B.1"/>
<dbReference type="eggNOG" id="KOG1322">
    <property type="taxonomic scope" value="Eukaryota"/>
</dbReference>
<dbReference type="BRENDA" id="2.7.7.27">
    <property type="organism ID" value="6500"/>
</dbReference>
<dbReference type="SABIO-RK" id="P30523"/>
<dbReference type="UniPathway" id="UPA00152"/>
<dbReference type="Proteomes" id="UP000019116">
    <property type="component" value="Unplaced"/>
</dbReference>
<dbReference type="ExpressionAtlas" id="P30523">
    <property type="expression patterns" value="baseline and differential"/>
</dbReference>
<dbReference type="GO" id="GO:0009501">
    <property type="term" value="C:amyloplast"/>
    <property type="evidence" value="ECO:0007669"/>
    <property type="project" value="UniProtKB-SubCell"/>
</dbReference>
<dbReference type="GO" id="GO:0009507">
    <property type="term" value="C:chloroplast"/>
    <property type="evidence" value="ECO:0007669"/>
    <property type="project" value="UniProtKB-SubCell"/>
</dbReference>
<dbReference type="GO" id="GO:0005524">
    <property type="term" value="F:ATP binding"/>
    <property type="evidence" value="ECO:0007669"/>
    <property type="project" value="UniProtKB-KW"/>
</dbReference>
<dbReference type="GO" id="GO:0008878">
    <property type="term" value="F:glucose-1-phosphate adenylyltransferase activity"/>
    <property type="evidence" value="ECO:0007669"/>
    <property type="project" value="UniProtKB-EC"/>
</dbReference>
<dbReference type="GO" id="GO:0005978">
    <property type="term" value="P:glycogen biosynthetic process"/>
    <property type="evidence" value="ECO:0007669"/>
    <property type="project" value="InterPro"/>
</dbReference>
<dbReference type="GO" id="GO:0019252">
    <property type="term" value="P:starch biosynthetic process"/>
    <property type="evidence" value="ECO:0007669"/>
    <property type="project" value="UniProtKB-UniPathway"/>
</dbReference>
<dbReference type="CDD" id="cd02508">
    <property type="entry name" value="ADP_Glucose_PP"/>
    <property type="match status" value="1"/>
</dbReference>
<dbReference type="CDD" id="cd04651">
    <property type="entry name" value="LbH_G1P_AT_C"/>
    <property type="match status" value="1"/>
</dbReference>
<dbReference type="FunFam" id="2.160.10.10:FF:000010">
    <property type="entry name" value="Glucose-1-phosphate adenylyltransferase"/>
    <property type="match status" value="1"/>
</dbReference>
<dbReference type="FunFam" id="3.90.550.10:FF:000030">
    <property type="entry name" value="Glucose-1-phosphate adenylyltransferase"/>
    <property type="match status" value="1"/>
</dbReference>
<dbReference type="Gene3D" id="2.160.10.10">
    <property type="entry name" value="Hexapeptide repeat proteins"/>
    <property type="match status" value="1"/>
</dbReference>
<dbReference type="Gene3D" id="3.90.550.10">
    <property type="entry name" value="Spore Coat Polysaccharide Biosynthesis Protein SpsA, Chain A"/>
    <property type="match status" value="1"/>
</dbReference>
<dbReference type="InterPro" id="IPR011831">
    <property type="entry name" value="ADP-Glc_PPase"/>
</dbReference>
<dbReference type="InterPro" id="IPR005836">
    <property type="entry name" value="ADP_Glu_pyroP_CS"/>
</dbReference>
<dbReference type="InterPro" id="IPR005835">
    <property type="entry name" value="NTP_transferase_dom"/>
</dbReference>
<dbReference type="InterPro" id="IPR029044">
    <property type="entry name" value="Nucleotide-diphossugar_trans"/>
</dbReference>
<dbReference type="InterPro" id="IPR011004">
    <property type="entry name" value="Trimer_LpxA-like_sf"/>
</dbReference>
<dbReference type="NCBIfam" id="TIGR02091">
    <property type="entry name" value="glgC"/>
    <property type="match status" value="1"/>
</dbReference>
<dbReference type="NCBIfam" id="NF002772">
    <property type="entry name" value="PRK02862.1"/>
    <property type="match status" value="1"/>
</dbReference>
<dbReference type="PANTHER" id="PTHR43523:SF12">
    <property type="entry name" value="GLUCOSE-1-PHOSPHATE ADENYLYLTRANSFERASE LARGE SUBUNIT 1, CHLOROPLASTIC-RELATED"/>
    <property type="match status" value="1"/>
</dbReference>
<dbReference type="PANTHER" id="PTHR43523">
    <property type="entry name" value="GLUCOSE-1-PHOSPHATE ADENYLYLTRANSFERASE-RELATED"/>
    <property type="match status" value="1"/>
</dbReference>
<dbReference type="Pfam" id="PF25247">
    <property type="entry name" value="LbH_GLGC"/>
    <property type="match status" value="1"/>
</dbReference>
<dbReference type="Pfam" id="PF00483">
    <property type="entry name" value="NTP_transferase"/>
    <property type="match status" value="1"/>
</dbReference>
<dbReference type="SUPFAM" id="SSF53448">
    <property type="entry name" value="Nucleotide-diphospho-sugar transferases"/>
    <property type="match status" value="1"/>
</dbReference>
<dbReference type="SUPFAM" id="SSF51161">
    <property type="entry name" value="Trimeric LpxA-like enzymes"/>
    <property type="match status" value="1"/>
</dbReference>
<dbReference type="PROSITE" id="PS00808">
    <property type="entry name" value="ADP_GLC_PYROPHOSPH_1"/>
    <property type="match status" value="1"/>
</dbReference>
<dbReference type="PROSITE" id="PS00809">
    <property type="entry name" value="ADP_GLC_PYROPHOSPH_2"/>
    <property type="match status" value="1"/>
</dbReference>
<dbReference type="PROSITE" id="PS00810">
    <property type="entry name" value="ADP_GLC_PYROPHOSPH_3"/>
    <property type="match status" value="1"/>
</dbReference>
<keyword id="KW-0021">Allosteric enzyme</keyword>
<keyword id="KW-0035">Amyloplast</keyword>
<keyword id="KW-0067">ATP-binding</keyword>
<keyword id="KW-0150">Chloroplast</keyword>
<keyword id="KW-0547">Nucleotide-binding</keyword>
<keyword id="KW-0548">Nucleotidyltransferase</keyword>
<keyword id="KW-0934">Plastid</keyword>
<keyword id="KW-1185">Reference proteome</keyword>
<keyword id="KW-0750">Starch biosynthesis</keyword>
<keyword id="KW-0808">Transferase</keyword>
<keyword id="KW-0809">Transit peptide</keyword>
<name>GLGS_WHEAT</name>
<organism>
    <name type="scientific">Triticum aestivum</name>
    <name type="common">Wheat</name>
    <dbReference type="NCBI Taxonomy" id="4565"/>
    <lineage>
        <taxon>Eukaryota</taxon>
        <taxon>Viridiplantae</taxon>
        <taxon>Streptophyta</taxon>
        <taxon>Embryophyta</taxon>
        <taxon>Tracheophyta</taxon>
        <taxon>Spermatophyta</taxon>
        <taxon>Magnoliopsida</taxon>
        <taxon>Liliopsida</taxon>
        <taxon>Poales</taxon>
        <taxon>Poaceae</taxon>
        <taxon>BOP clade</taxon>
        <taxon>Pooideae</taxon>
        <taxon>Triticodae</taxon>
        <taxon>Triticeae</taxon>
        <taxon>Triticinae</taxon>
        <taxon>Triticum</taxon>
    </lineage>
</organism>